<dbReference type="EC" id="4.2.1.19" evidence="1"/>
<dbReference type="EMBL" id="AF017113">
    <property type="protein sequence ID" value="AAC67296.1"/>
    <property type="molecule type" value="Genomic_DNA"/>
</dbReference>
<dbReference type="EMBL" id="AL009126">
    <property type="protein sequence ID" value="CAB15495.1"/>
    <property type="molecule type" value="Genomic_DNA"/>
</dbReference>
<dbReference type="PIR" id="G69640">
    <property type="entry name" value="G69640"/>
</dbReference>
<dbReference type="RefSeq" id="NP_391370.1">
    <property type="nucleotide sequence ID" value="NC_000964.3"/>
</dbReference>
<dbReference type="RefSeq" id="WP_003243389.1">
    <property type="nucleotide sequence ID" value="NZ_OZ025638.1"/>
</dbReference>
<dbReference type="SMR" id="O34683"/>
<dbReference type="FunCoup" id="O34683">
    <property type="interactions" value="550"/>
</dbReference>
<dbReference type="STRING" id="224308.BSU34900"/>
<dbReference type="PaxDb" id="224308-BSU34900"/>
<dbReference type="EnsemblBacteria" id="CAB15495">
    <property type="protein sequence ID" value="CAB15495"/>
    <property type="gene ID" value="BSU_34900"/>
</dbReference>
<dbReference type="GeneID" id="936560"/>
<dbReference type="KEGG" id="bsu:BSU34900"/>
<dbReference type="PATRIC" id="fig|224308.179.peg.3778"/>
<dbReference type="eggNOG" id="COG0131">
    <property type="taxonomic scope" value="Bacteria"/>
</dbReference>
<dbReference type="InParanoid" id="O34683"/>
<dbReference type="OrthoDB" id="9790411at2"/>
<dbReference type="PhylomeDB" id="O34683"/>
<dbReference type="BioCyc" id="BSUB:BSU34900-MONOMER"/>
<dbReference type="UniPathway" id="UPA00031">
    <property type="reaction ID" value="UER00011"/>
</dbReference>
<dbReference type="Proteomes" id="UP000001570">
    <property type="component" value="Chromosome"/>
</dbReference>
<dbReference type="GO" id="GO:0005737">
    <property type="term" value="C:cytoplasm"/>
    <property type="evidence" value="ECO:0007669"/>
    <property type="project" value="UniProtKB-SubCell"/>
</dbReference>
<dbReference type="GO" id="GO:0004424">
    <property type="term" value="F:imidazoleglycerol-phosphate dehydratase activity"/>
    <property type="evidence" value="ECO:0000318"/>
    <property type="project" value="GO_Central"/>
</dbReference>
<dbReference type="GO" id="GO:0000105">
    <property type="term" value="P:L-histidine biosynthetic process"/>
    <property type="evidence" value="ECO:0000318"/>
    <property type="project" value="GO_Central"/>
</dbReference>
<dbReference type="CDD" id="cd07914">
    <property type="entry name" value="IGPD"/>
    <property type="match status" value="1"/>
</dbReference>
<dbReference type="FunFam" id="3.30.230.40:FF:000001">
    <property type="entry name" value="Imidazoleglycerol-phosphate dehydratase HisB"/>
    <property type="match status" value="1"/>
</dbReference>
<dbReference type="FunFam" id="3.30.230.40:FF:000003">
    <property type="entry name" value="Imidazoleglycerol-phosphate dehydratase HisB"/>
    <property type="match status" value="1"/>
</dbReference>
<dbReference type="Gene3D" id="3.30.230.40">
    <property type="entry name" value="Imidazole glycerol phosphate dehydratase, domain 1"/>
    <property type="match status" value="2"/>
</dbReference>
<dbReference type="HAMAP" id="MF_00076">
    <property type="entry name" value="HisB"/>
    <property type="match status" value="1"/>
</dbReference>
<dbReference type="InterPro" id="IPR038494">
    <property type="entry name" value="IGPD_sf"/>
</dbReference>
<dbReference type="InterPro" id="IPR000807">
    <property type="entry name" value="ImidazoleglycerolP_deHydtase"/>
</dbReference>
<dbReference type="InterPro" id="IPR020565">
    <property type="entry name" value="ImidazoleglycerP_deHydtase_CS"/>
</dbReference>
<dbReference type="InterPro" id="IPR020568">
    <property type="entry name" value="Ribosomal_Su5_D2-typ_SF"/>
</dbReference>
<dbReference type="NCBIfam" id="NF002111">
    <property type="entry name" value="PRK00951.2-1"/>
    <property type="match status" value="1"/>
</dbReference>
<dbReference type="NCBIfam" id="NF002114">
    <property type="entry name" value="PRK00951.2-4"/>
    <property type="match status" value="1"/>
</dbReference>
<dbReference type="NCBIfam" id="NF002115">
    <property type="entry name" value="PRK00951.2-5"/>
    <property type="match status" value="1"/>
</dbReference>
<dbReference type="PANTHER" id="PTHR23133:SF2">
    <property type="entry name" value="IMIDAZOLEGLYCEROL-PHOSPHATE DEHYDRATASE"/>
    <property type="match status" value="1"/>
</dbReference>
<dbReference type="PANTHER" id="PTHR23133">
    <property type="entry name" value="IMIDAZOLEGLYCEROL-PHOSPHATE DEHYDRATASE HIS7"/>
    <property type="match status" value="1"/>
</dbReference>
<dbReference type="Pfam" id="PF00475">
    <property type="entry name" value="IGPD"/>
    <property type="match status" value="1"/>
</dbReference>
<dbReference type="SUPFAM" id="SSF54211">
    <property type="entry name" value="Ribosomal protein S5 domain 2-like"/>
    <property type="match status" value="2"/>
</dbReference>
<dbReference type="PROSITE" id="PS00954">
    <property type="entry name" value="IGP_DEHYDRATASE_1"/>
    <property type="match status" value="1"/>
</dbReference>
<dbReference type="PROSITE" id="PS00955">
    <property type="entry name" value="IGP_DEHYDRATASE_2"/>
    <property type="match status" value="1"/>
</dbReference>
<evidence type="ECO:0000255" key="1">
    <source>
        <dbReference type="HAMAP-Rule" id="MF_00076"/>
    </source>
</evidence>
<keyword id="KW-0028">Amino-acid biosynthesis</keyword>
<keyword id="KW-0963">Cytoplasm</keyword>
<keyword id="KW-0368">Histidine biosynthesis</keyword>
<keyword id="KW-0456">Lyase</keyword>
<keyword id="KW-1185">Reference proteome</keyword>
<comment type="catalytic activity">
    <reaction evidence="1">
        <text>D-erythro-1-(imidazol-4-yl)glycerol 3-phosphate = 3-(imidazol-4-yl)-2-oxopropyl phosphate + H2O</text>
        <dbReference type="Rhea" id="RHEA:11040"/>
        <dbReference type="ChEBI" id="CHEBI:15377"/>
        <dbReference type="ChEBI" id="CHEBI:57766"/>
        <dbReference type="ChEBI" id="CHEBI:58278"/>
        <dbReference type="EC" id="4.2.1.19"/>
    </reaction>
</comment>
<comment type="pathway">
    <text evidence="1">Amino-acid biosynthesis; L-histidine biosynthesis; L-histidine from 5-phospho-alpha-D-ribose 1-diphosphate: step 6/9.</text>
</comment>
<comment type="subcellular location">
    <subcellularLocation>
        <location evidence="1">Cytoplasm</location>
    </subcellularLocation>
</comment>
<comment type="similarity">
    <text evidence="1">Belongs to the imidazoleglycerol-phosphate dehydratase family.</text>
</comment>
<feature type="chain" id="PRO_0000158110" description="Imidazoleglycerol-phosphate dehydratase">
    <location>
        <begin position="1"/>
        <end position="194"/>
    </location>
</feature>
<protein>
    <recommendedName>
        <fullName evidence="1">Imidazoleglycerol-phosphate dehydratase</fullName>
        <shortName evidence="1">IGPD</shortName>
        <ecNumber evidence="1">4.2.1.19</ecNumber>
    </recommendedName>
</protein>
<proteinExistence type="inferred from homology"/>
<reference key="1">
    <citation type="submission" date="1997-11" db="EMBL/GenBank/DDBJ databases">
        <title>Nucleotide sequence of the 300-304 chromosomal segment of Bacillus subtilis.</title>
        <authorList>
            <person name="Lazarevic V."/>
            <person name="Soldo B."/>
            <person name="Rivolta C."/>
            <person name="Reynolds S."/>
            <person name="Mauel C."/>
            <person name="Karamata D."/>
        </authorList>
    </citation>
    <scope>NUCLEOTIDE SEQUENCE [GENOMIC DNA]</scope>
</reference>
<reference key="2">
    <citation type="journal article" date="1997" name="Nature">
        <title>The complete genome sequence of the Gram-positive bacterium Bacillus subtilis.</title>
        <authorList>
            <person name="Kunst F."/>
            <person name="Ogasawara N."/>
            <person name="Moszer I."/>
            <person name="Albertini A.M."/>
            <person name="Alloni G."/>
            <person name="Azevedo V."/>
            <person name="Bertero M.G."/>
            <person name="Bessieres P."/>
            <person name="Bolotin A."/>
            <person name="Borchert S."/>
            <person name="Borriss R."/>
            <person name="Boursier L."/>
            <person name="Brans A."/>
            <person name="Braun M."/>
            <person name="Brignell S.C."/>
            <person name="Bron S."/>
            <person name="Brouillet S."/>
            <person name="Bruschi C.V."/>
            <person name="Caldwell B."/>
            <person name="Capuano V."/>
            <person name="Carter N.M."/>
            <person name="Choi S.-K."/>
            <person name="Codani J.-J."/>
            <person name="Connerton I.F."/>
            <person name="Cummings N.J."/>
            <person name="Daniel R.A."/>
            <person name="Denizot F."/>
            <person name="Devine K.M."/>
            <person name="Duesterhoeft A."/>
            <person name="Ehrlich S.D."/>
            <person name="Emmerson P.T."/>
            <person name="Entian K.-D."/>
            <person name="Errington J."/>
            <person name="Fabret C."/>
            <person name="Ferrari E."/>
            <person name="Foulger D."/>
            <person name="Fritz C."/>
            <person name="Fujita M."/>
            <person name="Fujita Y."/>
            <person name="Fuma S."/>
            <person name="Galizzi A."/>
            <person name="Galleron N."/>
            <person name="Ghim S.-Y."/>
            <person name="Glaser P."/>
            <person name="Goffeau A."/>
            <person name="Golightly E.J."/>
            <person name="Grandi G."/>
            <person name="Guiseppi G."/>
            <person name="Guy B.J."/>
            <person name="Haga K."/>
            <person name="Haiech J."/>
            <person name="Harwood C.R."/>
            <person name="Henaut A."/>
            <person name="Hilbert H."/>
            <person name="Holsappel S."/>
            <person name="Hosono S."/>
            <person name="Hullo M.-F."/>
            <person name="Itaya M."/>
            <person name="Jones L.-M."/>
            <person name="Joris B."/>
            <person name="Karamata D."/>
            <person name="Kasahara Y."/>
            <person name="Klaerr-Blanchard M."/>
            <person name="Klein C."/>
            <person name="Kobayashi Y."/>
            <person name="Koetter P."/>
            <person name="Koningstein G."/>
            <person name="Krogh S."/>
            <person name="Kumano M."/>
            <person name="Kurita K."/>
            <person name="Lapidus A."/>
            <person name="Lardinois S."/>
            <person name="Lauber J."/>
            <person name="Lazarevic V."/>
            <person name="Lee S.-M."/>
            <person name="Levine A."/>
            <person name="Liu H."/>
            <person name="Masuda S."/>
            <person name="Mauel C."/>
            <person name="Medigue C."/>
            <person name="Medina N."/>
            <person name="Mellado R.P."/>
            <person name="Mizuno M."/>
            <person name="Moestl D."/>
            <person name="Nakai S."/>
            <person name="Noback M."/>
            <person name="Noone D."/>
            <person name="O'Reilly M."/>
            <person name="Ogawa K."/>
            <person name="Ogiwara A."/>
            <person name="Oudega B."/>
            <person name="Park S.-H."/>
            <person name="Parro V."/>
            <person name="Pohl T.M."/>
            <person name="Portetelle D."/>
            <person name="Porwollik S."/>
            <person name="Prescott A.M."/>
            <person name="Presecan E."/>
            <person name="Pujic P."/>
            <person name="Purnelle B."/>
            <person name="Rapoport G."/>
            <person name="Rey M."/>
            <person name="Reynolds S."/>
            <person name="Rieger M."/>
            <person name="Rivolta C."/>
            <person name="Rocha E."/>
            <person name="Roche B."/>
            <person name="Rose M."/>
            <person name="Sadaie Y."/>
            <person name="Sato T."/>
            <person name="Scanlan E."/>
            <person name="Schleich S."/>
            <person name="Schroeter R."/>
            <person name="Scoffone F."/>
            <person name="Sekiguchi J."/>
            <person name="Sekowska A."/>
            <person name="Seror S.J."/>
            <person name="Serror P."/>
            <person name="Shin B.-S."/>
            <person name="Soldo B."/>
            <person name="Sorokin A."/>
            <person name="Tacconi E."/>
            <person name="Takagi T."/>
            <person name="Takahashi H."/>
            <person name="Takemaru K."/>
            <person name="Takeuchi M."/>
            <person name="Tamakoshi A."/>
            <person name="Tanaka T."/>
            <person name="Terpstra P."/>
            <person name="Tognoni A."/>
            <person name="Tosato V."/>
            <person name="Uchiyama S."/>
            <person name="Vandenbol M."/>
            <person name="Vannier F."/>
            <person name="Vassarotti A."/>
            <person name="Viari A."/>
            <person name="Wambutt R."/>
            <person name="Wedler E."/>
            <person name="Wedler H."/>
            <person name="Weitzenegger T."/>
            <person name="Winters P."/>
            <person name="Wipat A."/>
            <person name="Yamamoto H."/>
            <person name="Yamane K."/>
            <person name="Yasumoto K."/>
            <person name="Yata K."/>
            <person name="Yoshida K."/>
            <person name="Yoshikawa H.-F."/>
            <person name="Zumstein E."/>
            <person name="Yoshikawa H."/>
            <person name="Danchin A."/>
        </authorList>
    </citation>
    <scope>NUCLEOTIDE SEQUENCE [LARGE SCALE GENOMIC DNA]</scope>
    <source>
        <strain>168</strain>
    </source>
</reference>
<sequence>MRKAERVRKTNETDIELAFTIDGGGQADIKTDVPFMTHMLDLFTKHGQFDLSINAKGDVDIDDHHTTEDIGICLGQALLEALGDKKGIKRYGSAFVPMDEALAQVVIDLSNRPHLEMRADFPAAKVGTFDTELVHEFLWKLALEARMNLHVIVHYGTNTHHMIEAVFKALGRALDEATTIDPRVKGIPSTKGML</sequence>
<name>HIS7_BACSU</name>
<accession>O34683</accession>
<organism>
    <name type="scientific">Bacillus subtilis (strain 168)</name>
    <dbReference type="NCBI Taxonomy" id="224308"/>
    <lineage>
        <taxon>Bacteria</taxon>
        <taxon>Bacillati</taxon>
        <taxon>Bacillota</taxon>
        <taxon>Bacilli</taxon>
        <taxon>Bacillales</taxon>
        <taxon>Bacillaceae</taxon>
        <taxon>Bacillus</taxon>
    </lineage>
</organism>
<gene>
    <name evidence="1" type="primary">hisB</name>
    <name type="ordered locus">BSU34900</name>
</gene>